<sequence>MAGNTIGQLFRVTTFGESHGLALGCIVDGVPPGIPLTEADLQHDLDRRRPGTSRYTTQRREPDQVKILSGVFEGVTTGTSIGLLIENTDQRSQDYSAIKDVFRPGHADYTYEQKYGLRDYRGGGRSSARETAMRVAAGAIAKKYLAEKFGIEIRGCLTQMGDIPLDIKDWSQVEQNPFFCPDPDKIDALDELMRALKKEGDSIGAKVTVVASGVPAGLGEPVFDRLDADIAHALMSINAVKGVEIGDGFDVVALRGSQNRDEITKDGFQSNHAGGILGGISSGQQIIAHMALKPTSSITVPGRTINRFGEEVEMITKGRHDPCVGIRAVPIAEAMLAIVLMDHLLRQRAQNADVKTDIPRW</sequence>
<keyword id="KW-0028">Amino-acid biosynthesis</keyword>
<keyword id="KW-0057">Aromatic amino acid biosynthesis</keyword>
<keyword id="KW-0274">FAD</keyword>
<keyword id="KW-0285">Flavoprotein</keyword>
<keyword id="KW-0288">FMN</keyword>
<keyword id="KW-0456">Lyase</keyword>
<keyword id="KW-0521">NADP</keyword>
<proteinExistence type="inferred from homology"/>
<gene>
    <name evidence="1" type="primary">aroC</name>
    <name type="ordered locus">ECDH10B_2491</name>
</gene>
<reference key="1">
    <citation type="journal article" date="2008" name="J. Bacteriol.">
        <title>The complete genome sequence of Escherichia coli DH10B: insights into the biology of a laboratory workhorse.</title>
        <authorList>
            <person name="Durfee T."/>
            <person name="Nelson R."/>
            <person name="Baldwin S."/>
            <person name="Plunkett G. III"/>
            <person name="Burland V."/>
            <person name="Mau B."/>
            <person name="Petrosino J.F."/>
            <person name="Qin X."/>
            <person name="Muzny D.M."/>
            <person name="Ayele M."/>
            <person name="Gibbs R.A."/>
            <person name="Csorgo B."/>
            <person name="Posfai G."/>
            <person name="Weinstock G.M."/>
            <person name="Blattner F.R."/>
        </authorList>
    </citation>
    <scope>NUCLEOTIDE SEQUENCE [LARGE SCALE GENOMIC DNA]</scope>
    <source>
        <strain>K12 / DH10B</strain>
    </source>
</reference>
<evidence type="ECO:0000255" key="1">
    <source>
        <dbReference type="HAMAP-Rule" id="MF_00300"/>
    </source>
</evidence>
<accession>B1X9K2</accession>
<protein>
    <recommendedName>
        <fullName evidence="1">Chorismate synthase</fullName>
        <shortName evidence="1">CS</shortName>
        <ecNumber evidence="1">4.2.3.5</ecNumber>
    </recommendedName>
    <alternativeName>
        <fullName evidence="1">5-enolpyruvylshikimate-3-phosphate phospholyase</fullName>
    </alternativeName>
</protein>
<dbReference type="EC" id="4.2.3.5" evidence="1"/>
<dbReference type="EMBL" id="CP000948">
    <property type="protein sequence ID" value="ACB03487.1"/>
    <property type="molecule type" value="Genomic_DNA"/>
</dbReference>
<dbReference type="RefSeq" id="WP_001333535.1">
    <property type="nucleotide sequence ID" value="NC_010473.1"/>
</dbReference>
<dbReference type="SMR" id="B1X9K2"/>
<dbReference type="GeneID" id="75172457"/>
<dbReference type="KEGG" id="ecd:ECDH10B_2491"/>
<dbReference type="HOGENOM" id="CLU_034547_0_2_6"/>
<dbReference type="UniPathway" id="UPA00053">
    <property type="reaction ID" value="UER00090"/>
</dbReference>
<dbReference type="GO" id="GO:0005829">
    <property type="term" value="C:cytosol"/>
    <property type="evidence" value="ECO:0007669"/>
    <property type="project" value="TreeGrafter"/>
</dbReference>
<dbReference type="GO" id="GO:0004107">
    <property type="term" value="F:chorismate synthase activity"/>
    <property type="evidence" value="ECO:0007669"/>
    <property type="project" value="UniProtKB-UniRule"/>
</dbReference>
<dbReference type="GO" id="GO:0010181">
    <property type="term" value="F:FMN binding"/>
    <property type="evidence" value="ECO:0007669"/>
    <property type="project" value="TreeGrafter"/>
</dbReference>
<dbReference type="GO" id="GO:0008652">
    <property type="term" value="P:amino acid biosynthetic process"/>
    <property type="evidence" value="ECO:0007669"/>
    <property type="project" value="UniProtKB-KW"/>
</dbReference>
<dbReference type="GO" id="GO:0009073">
    <property type="term" value="P:aromatic amino acid family biosynthetic process"/>
    <property type="evidence" value="ECO:0007669"/>
    <property type="project" value="UniProtKB-KW"/>
</dbReference>
<dbReference type="GO" id="GO:0009423">
    <property type="term" value="P:chorismate biosynthetic process"/>
    <property type="evidence" value="ECO:0007669"/>
    <property type="project" value="UniProtKB-UniRule"/>
</dbReference>
<dbReference type="CDD" id="cd07304">
    <property type="entry name" value="Chorismate_synthase"/>
    <property type="match status" value="1"/>
</dbReference>
<dbReference type="FunFam" id="3.60.150.10:FF:000001">
    <property type="entry name" value="Chorismate synthase"/>
    <property type="match status" value="1"/>
</dbReference>
<dbReference type="Gene3D" id="3.60.150.10">
    <property type="entry name" value="Chorismate synthase AroC"/>
    <property type="match status" value="1"/>
</dbReference>
<dbReference type="HAMAP" id="MF_00300">
    <property type="entry name" value="Chorismate_synth"/>
    <property type="match status" value="1"/>
</dbReference>
<dbReference type="InterPro" id="IPR000453">
    <property type="entry name" value="Chorismate_synth"/>
</dbReference>
<dbReference type="InterPro" id="IPR035904">
    <property type="entry name" value="Chorismate_synth_AroC_sf"/>
</dbReference>
<dbReference type="InterPro" id="IPR020541">
    <property type="entry name" value="Chorismate_synthase_CS"/>
</dbReference>
<dbReference type="NCBIfam" id="TIGR00033">
    <property type="entry name" value="aroC"/>
    <property type="match status" value="1"/>
</dbReference>
<dbReference type="NCBIfam" id="NF003793">
    <property type="entry name" value="PRK05382.1"/>
    <property type="match status" value="1"/>
</dbReference>
<dbReference type="PANTHER" id="PTHR21085">
    <property type="entry name" value="CHORISMATE SYNTHASE"/>
    <property type="match status" value="1"/>
</dbReference>
<dbReference type="PANTHER" id="PTHR21085:SF0">
    <property type="entry name" value="CHORISMATE SYNTHASE"/>
    <property type="match status" value="1"/>
</dbReference>
<dbReference type="Pfam" id="PF01264">
    <property type="entry name" value="Chorismate_synt"/>
    <property type="match status" value="1"/>
</dbReference>
<dbReference type="PIRSF" id="PIRSF001456">
    <property type="entry name" value="Chorismate_synth"/>
    <property type="match status" value="1"/>
</dbReference>
<dbReference type="SUPFAM" id="SSF103263">
    <property type="entry name" value="Chorismate synthase, AroC"/>
    <property type="match status" value="1"/>
</dbReference>
<dbReference type="PROSITE" id="PS00787">
    <property type="entry name" value="CHORISMATE_SYNTHASE_1"/>
    <property type="match status" value="1"/>
</dbReference>
<dbReference type="PROSITE" id="PS00788">
    <property type="entry name" value="CHORISMATE_SYNTHASE_2"/>
    <property type="match status" value="1"/>
</dbReference>
<dbReference type="PROSITE" id="PS00789">
    <property type="entry name" value="CHORISMATE_SYNTHASE_3"/>
    <property type="match status" value="1"/>
</dbReference>
<name>AROC_ECODH</name>
<comment type="function">
    <text evidence="1">Catalyzes the anti-1,4-elimination of the C-3 phosphate and the C-6 proR hydrogen from 5-enolpyruvylshikimate-3-phosphate (EPSP) to yield chorismate, which is the branch point compound that serves as the starting substrate for the three terminal pathways of aromatic amino acid biosynthesis. This reaction introduces a second double bond into the aromatic ring system.</text>
</comment>
<comment type="catalytic activity">
    <reaction evidence="1">
        <text>5-O-(1-carboxyvinyl)-3-phosphoshikimate = chorismate + phosphate</text>
        <dbReference type="Rhea" id="RHEA:21020"/>
        <dbReference type="ChEBI" id="CHEBI:29748"/>
        <dbReference type="ChEBI" id="CHEBI:43474"/>
        <dbReference type="ChEBI" id="CHEBI:57701"/>
        <dbReference type="EC" id="4.2.3.5"/>
    </reaction>
</comment>
<comment type="cofactor">
    <cofactor evidence="1">
        <name>FMNH2</name>
        <dbReference type="ChEBI" id="CHEBI:57618"/>
    </cofactor>
    <text evidence="1">Reduced FMN (FMNH(2)).</text>
</comment>
<comment type="pathway">
    <text evidence="1">Metabolic intermediate biosynthesis; chorismate biosynthesis; chorismate from D-erythrose 4-phosphate and phosphoenolpyruvate: step 7/7.</text>
</comment>
<comment type="subunit">
    <text evidence="1">Homotetramer.</text>
</comment>
<comment type="similarity">
    <text evidence="1">Belongs to the chorismate synthase family.</text>
</comment>
<feature type="chain" id="PRO_1000115349" description="Chorismate synthase">
    <location>
        <begin position="1"/>
        <end position="361"/>
    </location>
</feature>
<feature type="binding site" evidence="1">
    <location>
        <position position="48"/>
    </location>
    <ligand>
        <name>NADP(+)</name>
        <dbReference type="ChEBI" id="CHEBI:58349"/>
    </ligand>
</feature>
<feature type="binding site" evidence="1">
    <location>
        <position position="54"/>
    </location>
    <ligand>
        <name>NADP(+)</name>
        <dbReference type="ChEBI" id="CHEBI:58349"/>
    </ligand>
</feature>
<feature type="binding site" evidence="1">
    <location>
        <begin position="125"/>
        <end position="127"/>
    </location>
    <ligand>
        <name>FMN</name>
        <dbReference type="ChEBI" id="CHEBI:58210"/>
    </ligand>
</feature>
<feature type="binding site" evidence="1">
    <location>
        <begin position="238"/>
        <end position="239"/>
    </location>
    <ligand>
        <name>FMN</name>
        <dbReference type="ChEBI" id="CHEBI:58210"/>
    </ligand>
</feature>
<feature type="binding site" evidence="1">
    <location>
        <position position="278"/>
    </location>
    <ligand>
        <name>FMN</name>
        <dbReference type="ChEBI" id="CHEBI:58210"/>
    </ligand>
</feature>
<feature type="binding site" evidence="1">
    <location>
        <begin position="293"/>
        <end position="297"/>
    </location>
    <ligand>
        <name>FMN</name>
        <dbReference type="ChEBI" id="CHEBI:58210"/>
    </ligand>
</feature>
<feature type="binding site" evidence="1">
    <location>
        <position position="319"/>
    </location>
    <ligand>
        <name>FMN</name>
        <dbReference type="ChEBI" id="CHEBI:58210"/>
    </ligand>
</feature>
<organism>
    <name type="scientific">Escherichia coli (strain K12 / DH10B)</name>
    <dbReference type="NCBI Taxonomy" id="316385"/>
    <lineage>
        <taxon>Bacteria</taxon>
        <taxon>Pseudomonadati</taxon>
        <taxon>Pseudomonadota</taxon>
        <taxon>Gammaproteobacteria</taxon>
        <taxon>Enterobacterales</taxon>
        <taxon>Enterobacteriaceae</taxon>
        <taxon>Escherichia</taxon>
    </lineage>
</organism>